<evidence type="ECO:0000250" key="1"/>
<evidence type="ECO:0000250" key="2">
    <source>
        <dbReference type="UniProtKB" id="Q9NPF5"/>
    </source>
</evidence>
<evidence type="ECO:0000255" key="3"/>
<evidence type="ECO:0000256" key="4">
    <source>
        <dbReference type="SAM" id="MobiDB-lite"/>
    </source>
</evidence>
<evidence type="ECO:0000269" key="5">
    <source>
    </source>
</evidence>
<evidence type="ECO:0000303" key="6">
    <source>
    </source>
</evidence>
<evidence type="ECO:0000305" key="7"/>
<evidence type="ECO:0007744" key="8">
    <source>
    </source>
</evidence>
<proteinExistence type="evidence at protein level"/>
<protein>
    <recommendedName>
        <fullName>DNA methyltransferase 1-associated protein 1</fullName>
        <shortName>DNMAP1</shortName>
        <shortName>DNMT1-associated protein 1</shortName>
    </recommendedName>
    <alternativeName>
        <fullName>MAT1-mediated transcriptional repressor</fullName>
    </alternativeName>
</protein>
<gene>
    <name type="primary">Dmap1</name>
    <name type="synonym">Mmtr</name>
</gene>
<name>DMAP1_MOUSE</name>
<reference key="1">
    <citation type="journal article" date="2000" name="Nat. Genet.">
        <title>DNMT1 binds HDAC2 and a new co-repressor, DMAP1, to form a complex at replication foci.</title>
        <authorList>
            <person name="Rountree M.R."/>
            <person name="Bachman K.E."/>
            <person name="Baylin S.B."/>
        </authorList>
    </citation>
    <scope>NUCLEOTIDE SEQUENCE [MRNA] (ISOFORM 1)</scope>
    <source>
        <strain>C57BL/6J</strain>
    </source>
</reference>
<reference key="2">
    <citation type="submission" date="2001-10" db="EMBL/GenBank/DDBJ databases">
        <title>MMTR is a novel transcriptional regulator involved in MAT1-mediated transcriptional repression.</title>
        <authorList>
            <person name="Shin J.H."/>
            <person name="Kim C.G."/>
        </authorList>
    </citation>
    <scope>NUCLEOTIDE SEQUENCE [MRNA] (ISOFORM 1)</scope>
    <source>
        <strain>129/Sv</strain>
    </source>
</reference>
<reference key="3">
    <citation type="journal article" date="2005" name="Science">
        <title>The transcriptional landscape of the mammalian genome.</title>
        <authorList>
            <person name="Carninci P."/>
            <person name="Kasukawa T."/>
            <person name="Katayama S."/>
            <person name="Gough J."/>
            <person name="Frith M.C."/>
            <person name="Maeda N."/>
            <person name="Oyama R."/>
            <person name="Ravasi T."/>
            <person name="Lenhard B."/>
            <person name="Wells C."/>
            <person name="Kodzius R."/>
            <person name="Shimokawa K."/>
            <person name="Bajic V.B."/>
            <person name="Brenner S.E."/>
            <person name="Batalov S."/>
            <person name="Forrest A.R."/>
            <person name="Zavolan M."/>
            <person name="Davis M.J."/>
            <person name="Wilming L.G."/>
            <person name="Aidinis V."/>
            <person name="Allen J.E."/>
            <person name="Ambesi-Impiombato A."/>
            <person name="Apweiler R."/>
            <person name="Aturaliya R.N."/>
            <person name="Bailey T.L."/>
            <person name="Bansal M."/>
            <person name="Baxter L."/>
            <person name="Beisel K.W."/>
            <person name="Bersano T."/>
            <person name="Bono H."/>
            <person name="Chalk A.M."/>
            <person name="Chiu K.P."/>
            <person name="Choudhary V."/>
            <person name="Christoffels A."/>
            <person name="Clutterbuck D.R."/>
            <person name="Crowe M.L."/>
            <person name="Dalla E."/>
            <person name="Dalrymple B.P."/>
            <person name="de Bono B."/>
            <person name="Della Gatta G."/>
            <person name="di Bernardo D."/>
            <person name="Down T."/>
            <person name="Engstrom P."/>
            <person name="Fagiolini M."/>
            <person name="Faulkner G."/>
            <person name="Fletcher C.F."/>
            <person name="Fukushima T."/>
            <person name="Furuno M."/>
            <person name="Futaki S."/>
            <person name="Gariboldi M."/>
            <person name="Georgii-Hemming P."/>
            <person name="Gingeras T.R."/>
            <person name="Gojobori T."/>
            <person name="Green R.E."/>
            <person name="Gustincich S."/>
            <person name="Harbers M."/>
            <person name="Hayashi Y."/>
            <person name="Hensch T.K."/>
            <person name="Hirokawa N."/>
            <person name="Hill D."/>
            <person name="Huminiecki L."/>
            <person name="Iacono M."/>
            <person name="Ikeo K."/>
            <person name="Iwama A."/>
            <person name="Ishikawa T."/>
            <person name="Jakt M."/>
            <person name="Kanapin A."/>
            <person name="Katoh M."/>
            <person name="Kawasawa Y."/>
            <person name="Kelso J."/>
            <person name="Kitamura H."/>
            <person name="Kitano H."/>
            <person name="Kollias G."/>
            <person name="Krishnan S.P."/>
            <person name="Kruger A."/>
            <person name="Kummerfeld S.K."/>
            <person name="Kurochkin I.V."/>
            <person name="Lareau L.F."/>
            <person name="Lazarevic D."/>
            <person name="Lipovich L."/>
            <person name="Liu J."/>
            <person name="Liuni S."/>
            <person name="McWilliam S."/>
            <person name="Madan Babu M."/>
            <person name="Madera M."/>
            <person name="Marchionni L."/>
            <person name="Matsuda H."/>
            <person name="Matsuzawa S."/>
            <person name="Miki H."/>
            <person name="Mignone F."/>
            <person name="Miyake S."/>
            <person name="Morris K."/>
            <person name="Mottagui-Tabar S."/>
            <person name="Mulder N."/>
            <person name="Nakano N."/>
            <person name="Nakauchi H."/>
            <person name="Ng P."/>
            <person name="Nilsson R."/>
            <person name="Nishiguchi S."/>
            <person name="Nishikawa S."/>
            <person name="Nori F."/>
            <person name="Ohara O."/>
            <person name="Okazaki Y."/>
            <person name="Orlando V."/>
            <person name="Pang K.C."/>
            <person name="Pavan W.J."/>
            <person name="Pavesi G."/>
            <person name="Pesole G."/>
            <person name="Petrovsky N."/>
            <person name="Piazza S."/>
            <person name="Reed J."/>
            <person name="Reid J.F."/>
            <person name="Ring B.Z."/>
            <person name="Ringwald M."/>
            <person name="Rost B."/>
            <person name="Ruan Y."/>
            <person name="Salzberg S.L."/>
            <person name="Sandelin A."/>
            <person name="Schneider C."/>
            <person name="Schoenbach C."/>
            <person name="Sekiguchi K."/>
            <person name="Semple C.A."/>
            <person name="Seno S."/>
            <person name="Sessa L."/>
            <person name="Sheng Y."/>
            <person name="Shibata Y."/>
            <person name="Shimada H."/>
            <person name="Shimada K."/>
            <person name="Silva D."/>
            <person name="Sinclair B."/>
            <person name="Sperling S."/>
            <person name="Stupka E."/>
            <person name="Sugiura K."/>
            <person name="Sultana R."/>
            <person name="Takenaka Y."/>
            <person name="Taki K."/>
            <person name="Tammoja K."/>
            <person name="Tan S.L."/>
            <person name="Tang S."/>
            <person name="Taylor M.S."/>
            <person name="Tegner J."/>
            <person name="Teichmann S.A."/>
            <person name="Ueda H.R."/>
            <person name="van Nimwegen E."/>
            <person name="Verardo R."/>
            <person name="Wei C.L."/>
            <person name="Yagi K."/>
            <person name="Yamanishi H."/>
            <person name="Zabarovsky E."/>
            <person name="Zhu S."/>
            <person name="Zimmer A."/>
            <person name="Hide W."/>
            <person name="Bult C."/>
            <person name="Grimmond S.M."/>
            <person name="Teasdale R.D."/>
            <person name="Liu E.T."/>
            <person name="Brusic V."/>
            <person name="Quackenbush J."/>
            <person name="Wahlestedt C."/>
            <person name="Mattick J.S."/>
            <person name="Hume D.A."/>
            <person name="Kai C."/>
            <person name="Sasaki D."/>
            <person name="Tomaru Y."/>
            <person name="Fukuda S."/>
            <person name="Kanamori-Katayama M."/>
            <person name="Suzuki M."/>
            <person name="Aoki J."/>
            <person name="Arakawa T."/>
            <person name="Iida J."/>
            <person name="Imamura K."/>
            <person name="Itoh M."/>
            <person name="Kato T."/>
            <person name="Kawaji H."/>
            <person name="Kawagashira N."/>
            <person name="Kawashima T."/>
            <person name="Kojima M."/>
            <person name="Kondo S."/>
            <person name="Konno H."/>
            <person name="Nakano K."/>
            <person name="Ninomiya N."/>
            <person name="Nishio T."/>
            <person name="Okada M."/>
            <person name="Plessy C."/>
            <person name="Shibata K."/>
            <person name="Shiraki T."/>
            <person name="Suzuki S."/>
            <person name="Tagami M."/>
            <person name="Waki K."/>
            <person name="Watahiki A."/>
            <person name="Okamura-Oho Y."/>
            <person name="Suzuki H."/>
            <person name="Kawai J."/>
            <person name="Hayashizaki Y."/>
        </authorList>
    </citation>
    <scope>NUCLEOTIDE SEQUENCE [LARGE SCALE MRNA] (ISOFORM 2)</scope>
    <scope>NUCLEOTIDE SEQUENCE [LARGE SCALE MRNA] OF 1-257 (ISOFORM 1)</scope>
    <source>
        <strain>C57BL/6J</strain>
        <tissue>Cerebellum</tissue>
        <tissue>Embryo</tissue>
    </source>
</reference>
<reference key="4">
    <citation type="journal article" date="2004" name="Genome Res.">
        <title>The status, quality, and expansion of the NIH full-length cDNA project: the Mammalian Gene Collection (MGC).</title>
        <authorList>
            <consortium name="The MGC Project Team"/>
        </authorList>
    </citation>
    <scope>NUCLEOTIDE SEQUENCE [LARGE SCALE MRNA] (ISOFORM 1)</scope>
    <source>
        <strain>C57BL/6J</strain>
        <strain>FVB/N</strain>
        <tissue>Mammary gland</tissue>
        <tissue>Olfactory epithelium</tissue>
    </source>
</reference>
<reference key="5">
    <citation type="journal article" date="2004" name="J. Immunol.">
        <title>Physical and functional interactions between Daxx and DNA methyltransferase 1-associated protein, DMAP1.</title>
        <authorList>
            <person name="Muromoto R."/>
            <person name="Sugiyama K."/>
            <person name="Takachi A."/>
            <person name="Imoto S."/>
            <person name="Sato N."/>
            <person name="Yamamoto T."/>
            <person name="Oritani K."/>
            <person name="Shimoda K."/>
            <person name="Matsuda T."/>
        </authorList>
    </citation>
    <scope>FUNCTION</scope>
    <scope>INTERACTION WITH DAXX</scope>
</reference>
<reference key="6">
    <citation type="journal article" date="2004" name="Mol. Cell. Proteomics">
        <title>Phosphoproteomic analysis of the developing mouse brain.</title>
        <authorList>
            <person name="Ballif B.A."/>
            <person name="Villen J."/>
            <person name="Beausoleil S.A."/>
            <person name="Schwartz D."/>
            <person name="Gygi S.P."/>
        </authorList>
    </citation>
    <scope>PHOSPHORYLATION [LARGE SCALE ANALYSIS] AT THR-446</scope>
    <scope>IDENTIFICATION BY MASS SPECTROMETRY [LARGE SCALE ANALYSIS]</scope>
    <source>
        <tissue>Embryonic brain</tissue>
    </source>
</reference>
<reference key="7">
    <citation type="journal article" date="2010" name="Cell">
        <title>A tissue-specific atlas of mouse protein phosphorylation and expression.</title>
        <authorList>
            <person name="Huttlin E.L."/>
            <person name="Jedrychowski M.P."/>
            <person name="Elias J.E."/>
            <person name="Goswami T."/>
            <person name="Rad R."/>
            <person name="Beausoleil S.A."/>
            <person name="Villen J."/>
            <person name="Haas W."/>
            <person name="Sowa M.E."/>
            <person name="Gygi S.P."/>
        </authorList>
    </citation>
    <scope>IDENTIFICATION BY MASS SPECTROMETRY [LARGE SCALE ANALYSIS]</scope>
    <source>
        <tissue>Spleen</tissue>
    </source>
</reference>
<keyword id="KW-0025">Alternative splicing</keyword>
<keyword id="KW-0156">Chromatin regulator</keyword>
<keyword id="KW-0175">Coiled coil</keyword>
<keyword id="KW-0963">Cytoplasm</keyword>
<keyword id="KW-0341">Growth regulation</keyword>
<keyword id="KW-1017">Isopeptide bond</keyword>
<keyword id="KW-0539">Nucleus</keyword>
<keyword id="KW-0597">Phosphoprotein</keyword>
<keyword id="KW-1185">Reference proteome</keyword>
<keyword id="KW-0678">Repressor</keyword>
<keyword id="KW-0804">Transcription</keyword>
<keyword id="KW-0805">Transcription regulation</keyword>
<keyword id="KW-0832">Ubl conjugation</keyword>
<feature type="chain" id="PRO_0000079936" description="DNA methyltransferase 1-associated protein 1">
    <location>
        <begin position="1"/>
        <end position="468"/>
    </location>
</feature>
<feature type="domain" description="SANT">
    <location>
        <begin position="149"/>
        <end position="199"/>
    </location>
</feature>
<feature type="region of interest" description="Disordered" evidence="4">
    <location>
        <begin position="1"/>
        <end position="48"/>
    </location>
</feature>
<feature type="region of interest" description="Disordered" evidence="4">
    <location>
        <begin position="258"/>
        <end position="305"/>
    </location>
</feature>
<feature type="region of interest" description="Disordered" evidence="4">
    <location>
        <begin position="411"/>
        <end position="468"/>
    </location>
</feature>
<feature type="coiled-coil region" evidence="3">
    <location>
        <begin position="225"/>
        <end position="275"/>
    </location>
</feature>
<feature type="compositionally biased region" description="Basic and acidic residues" evidence="4">
    <location>
        <begin position="1"/>
        <end position="11"/>
    </location>
</feature>
<feature type="compositionally biased region" description="Basic and acidic residues" evidence="4">
    <location>
        <begin position="26"/>
        <end position="48"/>
    </location>
</feature>
<feature type="compositionally biased region" description="Basic and acidic residues" evidence="4">
    <location>
        <begin position="258"/>
        <end position="267"/>
    </location>
</feature>
<feature type="modified residue" description="Phosphothreonine" evidence="8">
    <location>
        <position position="446"/>
    </location>
</feature>
<feature type="modified residue" description="Phosphoserine" evidence="2">
    <location>
        <position position="449"/>
    </location>
</feature>
<feature type="cross-link" description="Glycyl lysine isopeptide (Lys-Gly) (interchain with G-Cter in SUMO2)" evidence="2">
    <location>
        <position position="27"/>
    </location>
</feature>
<feature type="cross-link" description="Glycyl lysine isopeptide (Lys-Gly) (interchain with G-Cter in SUMO2)" evidence="2">
    <location>
        <position position="214"/>
    </location>
</feature>
<feature type="splice variant" id="VSP_003850" description="In isoform 2." evidence="6">
    <original>AEEEYLLQELRKIEARKKEREKRSQDLQKLITAADTTAEQRRTERKAPKKKLPQKKEAEKPAVPETAGIKFPDFKSAGVTLR</original>
    <variation>ITSSTPPSTAQLSLPPGPFTSSPFLWSLFLPSLQESPYLWSLIDNLVSRQLPSHLLPHSPHTHGSISCFAGGRGGVPPTGAA</variation>
    <location>
        <begin position="242"/>
        <end position="323"/>
    </location>
</feature>
<feature type="splice variant" id="VSP_003851" description="In isoform 2." evidence="6">
    <location>
        <begin position="324"/>
        <end position="468"/>
    </location>
</feature>
<accession>Q9JI44</accession>
<accession>Q99LM0</accession>
<accession>Q9CSS9</accession>
<accession>Q9DB33</accession>
<comment type="function">
    <text evidence="1 5">Involved in transcription repression and activation. Its interaction with HDAC2 may provide a mechanism for histone deacetylation in heterochromatin following replication of DNA at late firing origins. Can also repress transcription independently of histone deacetylase activity. May specifically potentiate DAXX-mediated repression of glucocorticoid receptor-dependent transcription. Component of the NuA4 histone acetyltransferase (HAT) complex which is involved in transcriptional activation of select genes principally by acetylation of nucleosomal histones H4 and H2A. This modification may both alter nucleosome - DNA interactions and promote interaction of the modified histones with other proteins which positively regulate transcription. This complex may be required for the activation of transcriptional programs associated with oncogene and proto-oncogene mediated growth induction, tumor suppressor mediated growth arrest and replicative senescence, apoptosis, and DNA repair. NuA4 may also play a direct role in DNA repair when recruited to sites of DNA damage. Participates in the nuclear localization of URI1 and increases its transcriptional corepressor activity (By similarity).</text>
</comment>
<comment type="subunit">
    <text evidence="1 5">Component of the NuA4 histone acetyltransferase complex which contains the catalytic subunit KAT5/TIP60 and the subunits EP400, TRRAP/PAF400, BRD8/SMAP, EPC1, DMAP1/DNMAP1, RUVBL1/TIP49, RUVBL2, ING3, actin, ACTL6A/BAF53A, MORF4L1/MRG15, MORF4L2/MRGX, MRGBP, YEATS4/GAS41, VPS72/YL1 and MEAF6. Component of a NuA4-related complex which contains EP400, TRRAP/PAF400, SRCAP, BRD8/SMAP, EPC1, DMAP1/DNMAP1, RUVBL1/TIP49, RUVBL2, actin, ACTL6A/BAF53A, VPS72 and YEATS4/GAS41. DMAP1 also forms a complex with DNMT1 and HDAC2. Throughout S phase it interacts directly with the N-terminus of DNMT1, which serves to recruit DMAP1 to replication foci. DMAP1 interacts with ING1, a component of the mSIN3A transcription repressor complex, although this interaction is not required for recruitment of ING1 to heterochromatin. Interacts directly with the transcriptional corepressor TSG101. Interacts with URI1 (By similarity). Interacts with the pro-apoptotic protein DAXX.</text>
</comment>
<comment type="subcellular location">
    <subcellularLocation>
        <location>Nucleus</location>
    </subcellularLocation>
    <subcellularLocation>
        <location evidence="1">Cytoplasm</location>
    </subcellularLocation>
    <text>Targeted to replication foci throughout S phase by DNMT1.</text>
</comment>
<comment type="alternative products">
    <event type="alternative splicing"/>
    <isoform>
        <id>Q9JI44-1</id>
        <name>1</name>
        <sequence type="displayed"/>
    </isoform>
    <isoform>
        <id>Q9JI44-2</id>
        <name>2</name>
        <sequence type="described" ref="VSP_003850 VSP_003851"/>
    </isoform>
</comment>
<comment type="miscellaneous">
    <molecule>Isoform 2</molecule>
    <text evidence="7">May be due to intron retention.</text>
</comment>
<dbReference type="EMBL" id="AF265229">
    <property type="protein sequence ID" value="AAF87080.1"/>
    <property type="molecule type" value="mRNA"/>
</dbReference>
<dbReference type="EMBL" id="AF438610">
    <property type="protein sequence ID" value="AAL31640.1"/>
    <property type="molecule type" value="mRNA"/>
</dbReference>
<dbReference type="EMBL" id="AK005270">
    <property type="status" value="NOT_ANNOTATED_CDS"/>
    <property type="molecule type" value="mRNA"/>
</dbReference>
<dbReference type="EMBL" id="AK012055">
    <property type="protein sequence ID" value="BAB27996.3"/>
    <property type="molecule type" value="mRNA"/>
</dbReference>
<dbReference type="EMBL" id="BC002321">
    <property type="protein sequence ID" value="AAH02321.1"/>
    <property type="molecule type" value="mRNA"/>
</dbReference>
<dbReference type="EMBL" id="BC045160">
    <property type="protein sequence ID" value="AAH45160.1"/>
    <property type="molecule type" value="mRNA"/>
</dbReference>
<dbReference type="CCDS" id="CCDS18536.1">
    <molecule id="Q9JI44-1"/>
</dbReference>
<dbReference type="RefSeq" id="NP_001405990.1">
    <molecule id="Q9JI44-1"/>
    <property type="nucleotide sequence ID" value="NM_001419061.1"/>
</dbReference>
<dbReference type="RefSeq" id="NP_001405991.1">
    <molecule id="Q9JI44-1"/>
    <property type="nucleotide sequence ID" value="NM_001419062.1"/>
</dbReference>
<dbReference type="RefSeq" id="NP_001405992.1">
    <molecule id="Q9JI44-1"/>
    <property type="nucleotide sequence ID" value="NM_001419063.1"/>
</dbReference>
<dbReference type="RefSeq" id="NP_075667.1">
    <molecule id="Q9JI44-1"/>
    <property type="nucleotide sequence ID" value="NM_023178.3"/>
</dbReference>
<dbReference type="RefSeq" id="XP_006503329.1">
    <property type="nucleotide sequence ID" value="XM_006503266.2"/>
</dbReference>
<dbReference type="RefSeq" id="XP_006503330.1">
    <property type="nucleotide sequence ID" value="XM_006503267.3"/>
</dbReference>
<dbReference type="RefSeq" id="XP_006503331.1">
    <property type="nucleotide sequence ID" value="XM_006503268.3"/>
</dbReference>
<dbReference type="SMR" id="Q9JI44"/>
<dbReference type="BioGRID" id="211314">
    <property type="interactions" value="11"/>
</dbReference>
<dbReference type="ComplexPortal" id="CPX-976">
    <property type="entry name" value="SRCAP chromatin remodeling complex"/>
</dbReference>
<dbReference type="ComplexPortal" id="CPX-990">
    <property type="entry name" value="NuA4 histone acetyltransferase complex"/>
</dbReference>
<dbReference type="CORUM" id="Q9JI44"/>
<dbReference type="FunCoup" id="Q9JI44">
    <property type="interactions" value="4202"/>
</dbReference>
<dbReference type="IntAct" id="Q9JI44">
    <property type="interactions" value="22"/>
</dbReference>
<dbReference type="MINT" id="Q9JI44"/>
<dbReference type="STRING" id="10090.ENSMUSP00000099748"/>
<dbReference type="GlyGen" id="Q9JI44">
    <property type="glycosylation" value="1 site"/>
</dbReference>
<dbReference type="iPTMnet" id="Q9JI44"/>
<dbReference type="PhosphoSitePlus" id="Q9JI44"/>
<dbReference type="jPOST" id="Q9JI44"/>
<dbReference type="PaxDb" id="10090-ENSMUSP00000099748"/>
<dbReference type="PeptideAtlas" id="Q9JI44"/>
<dbReference type="ProteomicsDB" id="277337">
    <molecule id="Q9JI44-1"/>
</dbReference>
<dbReference type="ProteomicsDB" id="277338">
    <molecule id="Q9JI44-2"/>
</dbReference>
<dbReference type="Pumba" id="Q9JI44"/>
<dbReference type="Antibodypedia" id="18433">
    <property type="antibodies" value="290 antibodies from 35 providers"/>
</dbReference>
<dbReference type="DNASU" id="66233"/>
<dbReference type="Ensembl" id="ENSMUST00000102687.4">
    <molecule id="Q9JI44-1"/>
    <property type="protein sequence ID" value="ENSMUSP00000099748.4"/>
    <property type="gene ID" value="ENSMUSG00000009640.12"/>
</dbReference>
<dbReference type="GeneID" id="66233"/>
<dbReference type="KEGG" id="mmu:66233"/>
<dbReference type="UCSC" id="uc008uiw.1">
    <molecule id="Q9JI44-1"/>
    <property type="organism name" value="mouse"/>
</dbReference>
<dbReference type="AGR" id="MGI:1913483"/>
<dbReference type="CTD" id="55929"/>
<dbReference type="MGI" id="MGI:1913483">
    <property type="gene designation" value="Dmap1"/>
</dbReference>
<dbReference type="VEuPathDB" id="HostDB:ENSMUSG00000009640"/>
<dbReference type="eggNOG" id="KOG2656">
    <property type="taxonomic scope" value="Eukaryota"/>
</dbReference>
<dbReference type="GeneTree" id="ENSGT00390000016466"/>
<dbReference type="HOGENOM" id="CLU_018539_1_1_1"/>
<dbReference type="InParanoid" id="Q9JI44"/>
<dbReference type="OMA" id="RNNIQNW"/>
<dbReference type="OrthoDB" id="19740at2759"/>
<dbReference type="PhylomeDB" id="Q9JI44"/>
<dbReference type="TreeFam" id="TF354261"/>
<dbReference type="BioGRID-ORCS" id="66233">
    <property type="hits" value="28 hits in 121 CRISPR screens"/>
</dbReference>
<dbReference type="PRO" id="PR:Q9JI44"/>
<dbReference type="Proteomes" id="UP000000589">
    <property type="component" value="Chromosome 4"/>
</dbReference>
<dbReference type="RNAct" id="Q9JI44">
    <property type="molecule type" value="protein"/>
</dbReference>
<dbReference type="Bgee" id="ENSMUSG00000009640">
    <property type="expression patterns" value="Expressed in skin of snout and 260 other cell types or tissues"/>
</dbReference>
<dbReference type="GO" id="GO:0005737">
    <property type="term" value="C:cytoplasm"/>
    <property type="evidence" value="ECO:0000250"/>
    <property type="project" value="UniProtKB"/>
</dbReference>
<dbReference type="GO" id="GO:0005829">
    <property type="term" value="C:cytosol"/>
    <property type="evidence" value="ECO:0007669"/>
    <property type="project" value="Ensembl"/>
</dbReference>
<dbReference type="GO" id="GO:0035267">
    <property type="term" value="C:NuA4 histone acetyltransferase complex"/>
    <property type="evidence" value="ECO:0000250"/>
    <property type="project" value="UniProtKB"/>
</dbReference>
<dbReference type="GO" id="GO:0005654">
    <property type="term" value="C:nucleoplasm"/>
    <property type="evidence" value="ECO:0007669"/>
    <property type="project" value="Ensembl"/>
</dbReference>
<dbReference type="GO" id="GO:0000786">
    <property type="term" value="C:nucleosome"/>
    <property type="evidence" value="ECO:0000266"/>
    <property type="project" value="ComplexPortal"/>
</dbReference>
<dbReference type="GO" id="GO:0005634">
    <property type="term" value="C:nucleus"/>
    <property type="evidence" value="ECO:0000250"/>
    <property type="project" value="UniProtKB"/>
</dbReference>
<dbReference type="GO" id="GO:0005657">
    <property type="term" value="C:replication fork"/>
    <property type="evidence" value="ECO:0000314"/>
    <property type="project" value="MGI"/>
</dbReference>
<dbReference type="GO" id="GO:0061629">
    <property type="term" value="F:RNA polymerase II-specific DNA-binding transcription factor binding"/>
    <property type="evidence" value="ECO:0000250"/>
    <property type="project" value="UniProtKB"/>
</dbReference>
<dbReference type="GO" id="GO:0003714">
    <property type="term" value="F:transcription corepressor activity"/>
    <property type="evidence" value="ECO:0000314"/>
    <property type="project" value="MGI"/>
</dbReference>
<dbReference type="GO" id="GO:0006338">
    <property type="term" value="P:chromatin remodeling"/>
    <property type="evidence" value="ECO:0007669"/>
    <property type="project" value="InterPro"/>
</dbReference>
<dbReference type="GO" id="GO:0006281">
    <property type="term" value="P:DNA repair"/>
    <property type="evidence" value="ECO:0007669"/>
    <property type="project" value="InterPro"/>
</dbReference>
<dbReference type="GO" id="GO:0000122">
    <property type="term" value="P:negative regulation of transcription by RNA polymerase II"/>
    <property type="evidence" value="ECO:0000314"/>
    <property type="project" value="MGI"/>
</dbReference>
<dbReference type="GO" id="GO:0045893">
    <property type="term" value="P:positive regulation of DNA-templated transcription"/>
    <property type="evidence" value="ECO:0000303"/>
    <property type="project" value="ComplexPortal"/>
</dbReference>
<dbReference type="GO" id="GO:1905168">
    <property type="term" value="P:positive regulation of double-strand break repair via homologous recombination"/>
    <property type="evidence" value="ECO:0000266"/>
    <property type="project" value="ComplexPortal"/>
</dbReference>
<dbReference type="GO" id="GO:0042307">
    <property type="term" value="P:positive regulation of protein import into nucleus"/>
    <property type="evidence" value="ECO:0000250"/>
    <property type="project" value="UniProtKB"/>
</dbReference>
<dbReference type="GO" id="GO:0042981">
    <property type="term" value="P:regulation of apoptotic process"/>
    <property type="evidence" value="ECO:0000303"/>
    <property type="project" value="ComplexPortal"/>
</dbReference>
<dbReference type="GO" id="GO:0051726">
    <property type="term" value="P:regulation of cell cycle"/>
    <property type="evidence" value="ECO:0000266"/>
    <property type="project" value="ComplexPortal"/>
</dbReference>
<dbReference type="GO" id="GO:0006355">
    <property type="term" value="P:regulation of DNA-templated transcription"/>
    <property type="evidence" value="ECO:0000303"/>
    <property type="project" value="ComplexPortal"/>
</dbReference>
<dbReference type="GO" id="GO:2000779">
    <property type="term" value="P:regulation of double-strand break repair"/>
    <property type="evidence" value="ECO:0000303"/>
    <property type="project" value="ComplexPortal"/>
</dbReference>
<dbReference type="GO" id="GO:0045471">
    <property type="term" value="P:response to ethanol"/>
    <property type="evidence" value="ECO:0007669"/>
    <property type="project" value="Ensembl"/>
</dbReference>
<dbReference type="CDD" id="cd11658">
    <property type="entry name" value="SANT_DMAP1_like"/>
    <property type="match status" value="1"/>
</dbReference>
<dbReference type="FunFam" id="1.10.10.60:FF:000087">
    <property type="entry name" value="DNA methyltransferase 1-associated protein 1"/>
    <property type="match status" value="1"/>
</dbReference>
<dbReference type="Gene3D" id="1.10.10.60">
    <property type="entry name" value="Homeodomain-like"/>
    <property type="match status" value="1"/>
</dbReference>
<dbReference type="InterPro" id="IPR032563">
    <property type="entry name" value="DAMP1_SANT-like"/>
</dbReference>
<dbReference type="InterPro" id="IPR008468">
    <property type="entry name" value="DMAP1"/>
</dbReference>
<dbReference type="InterPro" id="IPR027109">
    <property type="entry name" value="Swc4/Dmap1"/>
</dbReference>
<dbReference type="PANTHER" id="PTHR12855:SF10">
    <property type="entry name" value="DNA METHYLTRANSFERASE 1-ASSOCIATED PROTEIN 1"/>
    <property type="match status" value="1"/>
</dbReference>
<dbReference type="PANTHER" id="PTHR12855">
    <property type="entry name" value="DNA METHYLTRANSFERASE 1-ASSOCIATED PROTEIN 1 FAMILY MEMBER"/>
    <property type="match status" value="1"/>
</dbReference>
<dbReference type="Pfam" id="PF05499">
    <property type="entry name" value="DMAP1"/>
    <property type="match status" value="1"/>
</dbReference>
<dbReference type="Pfam" id="PF16282">
    <property type="entry name" value="SANT_DAMP1_like"/>
    <property type="match status" value="1"/>
</dbReference>
<organism>
    <name type="scientific">Mus musculus</name>
    <name type="common">Mouse</name>
    <dbReference type="NCBI Taxonomy" id="10090"/>
    <lineage>
        <taxon>Eukaryota</taxon>
        <taxon>Metazoa</taxon>
        <taxon>Chordata</taxon>
        <taxon>Craniata</taxon>
        <taxon>Vertebrata</taxon>
        <taxon>Euteleostomi</taxon>
        <taxon>Mammalia</taxon>
        <taxon>Eutheria</taxon>
        <taxon>Euarchontoglires</taxon>
        <taxon>Glires</taxon>
        <taxon>Rodentia</taxon>
        <taxon>Myomorpha</taxon>
        <taxon>Muroidea</taxon>
        <taxon>Muridae</taxon>
        <taxon>Murinae</taxon>
        <taxon>Mus</taxon>
        <taxon>Mus</taxon>
    </lineage>
</organism>
<sequence length="468" mass="53130">MATGADVRDILELGGPEGDAASGTISKKDIINPDKKKSKKSSETLTFKRPEGMHREVYALLYSDKKDAPPLLPSDTGQGYRTVKAKLGSKKVRPWKWMPFTNPARKDGAMFFHWRRAAEEGKDYPFARFNKTVQVPVYSEQEYQLYLHDDAWTKAETDHLFDLSRRFDLRFVVIHDRYDHQQFKKRSVEDLKERYYHICAKLANVRAVPGTDLKIPVFDAGHERRRKEQLERLYNRTPEQVAEEEYLLQELRKIEARKKEREKRSQDLQKLITAADTTAEQRRTERKAPKKKLPQKKEAEKPAVPETAGIKFPDFKSAGVTLRSQRMKLPSSVGQKKIKALEQMLLELGVELSPTPTEELVHMFNELRSDLVLLYELKQACANCEYELQMLRHRHEALARAGVLGAPAAAAVGPTPASAEPTVSESGLGLDPTKDTIIDVVGAPLTPNSRKRRESASSSSSVKKAKKP</sequence>